<comment type="function">
    <text evidence="1">ATP-binding RNA helicase involved in the biogenesis of 60S ribosomal subunits and is required for the normal formation of 25S and 5.8S rRNAs.</text>
</comment>
<comment type="catalytic activity">
    <reaction>
        <text>ATP + H2O = ADP + phosphate + H(+)</text>
        <dbReference type="Rhea" id="RHEA:13065"/>
        <dbReference type="ChEBI" id="CHEBI:15377"/>
        <dbReference type="ChEBI" id="CHEBI:15378"/>
        <dbReference type="ChEBI" id="CHEBI:30616"/>
        <dbReference type="ChEBI" id="CHEBI:43474"/>
        <dbReference type="ChEBI" id="CHEBI:456216"/>
        <dbReference type="EC" id="3.6.4.13"/>
    </reaction>
</comment>
<comment type="subcellular location">
    <subcellularLocation>
        <location evidence="1">Nucleus</location>
        <location evidence="1">Nucleolus</location>
    </subcellularLocation>
</comment>
<comment type="domain">
    <text>The Q motif is unique to and characteristic of the DEAD box family of RNA helicases and controls ATP binding and hydrolysis.</text>
</comment>
<comment type="similarity">
    <text evidence="5">Belongs to the DEAD box helicase family. DDX56/DBP9 subfamily.</text>
</comment>
<feature type="chain" id="PRO_0000294671" description="ATP-dependent RNA helicase DBP9">
    <location>
        <begin position="1"/>
        <end position="636"/>
    </location>
</feature>
<feature type="domain" description="Helicase ATP-binding" evidence="2">
    <location>
        <begin position="74"/>
        <end position="253"/>
    </location>
</feature>
<feature type="domain" description="Helicase C-terminal" evidence="3">
    <location>
        <begin position="264"/>
        <end position="489"/>
    </location>
</feature>
<feature type="region of interest" description="Disordered" evidence="4">
    <location>
        <begin position="1"/>
        <end position="44"/>
    </location>
</feature>
<feature type="region of interest" description="Disordered" evidence="4">
    <location>
        <begin position="352"/>
        <end position="407"/>
    </location>
</feature>
<feature type="region of interest" description="Disordered" evidence="4">
    <location>
        <begin position="600"/>
        <end position="636"/>
    </location>
</feature>
<feature type="short sequence motif" description="Q motif">
    <location>
        <begin position="43"/>
        <end position="71"/>
    </location>
</feature>
<feature type="short sequence motif" description="DEAD box">
    <location>
        <begin position="201"/>
        <end position="204"/>
    </location>
</feature>
<feature type="compositionally biased region" description="Low complexity" evidence="4">
    <location>
        <begin position="31"/>
        <end position="44"/>
    </location>
</feature>
<feature type="compositionally biased region" description="Basic and acidic residues" evidence="4">
    <location>
        <begin position="356"/>
        <end position="378"/>
    </location>
</feature>
<feature type="compositionally biased region" description="Basic residues" evidence="4">
    <location>
        <begin position="392"/>
        <end position="401"/>
    </location>
</feature>
<feature type="compositionally biased region" description="Basic residues" evidence="4">
    <location>
        <begin position="603"/>
        <end position="612"/>
    </location>
</feature>
<feature type="binding site" evidence="2">
    <location>
        <begin position="87"/>
        <end position="94"/>
    </location>
    <ligand>
        <name>ATP</name>
        <dbReference type="ChEBI" id="CHEBI:30616"/>
    </ligand>
</feature>
<sequence>MKRKLNENNEPVLVSGTNKKKSDTEVSSAVANATPSSEAASSSSFADLGLDPRLLQAVAQQSFQKPTLVQSKAIPLALEGRDVLAKAKTGSGKTAAYVLPILQAVLKRKQINPGATYISSLILVPTRELTVQVTKEVERFSAFCAKEVQVVGLTDKVSDAVQRSLLQSSSPDIVVSTPSTAWRNVDSGALSLDKLTHLVLDEADLVLSYGYDEDLEKVARGLPKGVQTVMTSATLTDEIDTLKGIFLRDPVLLDLEEPDAEGSEITQYIVKCGEDEKFLLAYILFKLQLIKGKVIIFVADVDRCYRLKLFFEQFGIRSCILNSELPVNSRISVVEEFNRNVYDIIIASDENEMMGDEDRPAPNGDGKEEAEVDKKHENEDEGQDGEASKAAPRPKKKRKMDRKRDKQYGVSRGIDFKNVAVVVNFDLPLSSTSYTHRIGRTGRAGQAGMVLSFYVPKELFRKHIPTSIDSAENDEKVLARVIKQQKKLGREIKPYNFDRDQVESFRYRMNDALRAVTKIAVREARTRELRQELLKSEKLKRHFEENPAELQHLVRHDGELRTARANPELRHVPDYLLPKEGRKGLSAAEIGFVPLRKSSDRQKKGRFFKKGGARSFKAGGRKPDPLKTFKAKRKTK</sequence>
<evidence type="ECO:0000250" key="1"/>
<evidence type="ECO:0000255" key="2">
    <source>
        <dbReference type="PROSITE-ProRule" id="PRU00541"/>
    </source>
</evidence>
<evidence type="ECO:0000255" key="3">
    <source>
        <dbReference type="PROSITE-ProRule" id="PRU00542"/>
    </source>
</evidence>
<evidence type="ECO:0000256" key="4">
    <source>
        <dbReference type="SAM" id="MobiDB-lite"/>
    </source>
</evidence>
<evidence type="ECO:0000305" key="5"/>
<proteinExistence type="inferred from homology"/>
<name>DBP9_PYRO7</name>
<gene>
    <name type="primary">DBP9</name>
    <name type="ORF">MGG_04993</name>
</gene>
<reference key="1">
    <citation type="journal article" date="2005" name="Nature">
        <title>The genome sequence of the rice blast fungus Magnaporthe grisea.</title>
        <authorList>
            <person name="Dean R.A."/>
            <person name="Talbot N.J."/>
            <person name="Ebbole D.J."/>
            <person name="Farman M.L."/>
            <person name="Mitchell T.K."/>
            <person name="Orbach M.J."/>
            <person name="Thon M.R."/>
            <person name="Kulkarni R."/>
            <person name="Xu J.-R."/>
            <person name="Pan H."/>
            <person name="Read N.D."/>
            <person name="Lee Y.-H."/>
            <person name="Carbone I."/>
            <person name="Brown D."/>
            <person name="Oh Y.Y."/>
            <person name="Donofrio N."/>
            <person name="Jeong J.S."/>
            <person name="Soanes D.M."/>
            <person name="Djonovic S."/>
            <person name="Kolomiets E."/>
            <person name="Rehmeyer C."/>
            <person name="Li W."/>
            <person name="Harding M."/>
            <person name="Kim S."/>
            <person name="Lebrun M.-H."/>
            <person name="Bohnert H."/>
            <person name="Coughlan S."/>
            <person name="Butler J."/>
            <person name="Calvo S.E."/>
            <person name="Ma L.-J."/>
            <person name="Nicol R."/>
            <person name="Purcell S."/>
            <person name="Nusbaum C."/>
            <person name="Galagan J.E."/>
            <person name="Birren B.W."/>
        </authorList>
    </citation>
    <scope>NUCLEOTIDE SEQUENCE [LARGE SCALE GENOMIC DNA]</scope>
    <source>
        <strain>70-15 / ATCC MYA-4617 / FGSC 8958</strain>
    </source>
</reference>
<dbReference type="EC" id="3.6.4.13"/>
<dbReference type="EMBL" id="CM001233">
    <property type="protein sequence ID" value="EHA52686.1"/>
    <property type="molecule type" value="Genomic_DNA"/>
</dbReference>
<dbReference type="RefSeq" id="XP_003712493.1">
    <property type="nucleotide sequence ID" value="XM_003712445.1"/>
</dbReference>
<dbReference type="SMR" id="A4QTR1"/>
<dbReference type="FunCoup" id="A4QTR1">
    <property type="interactions" value="959"/>
</dbReference>
<dbReference type="STRING" id="242507.A4QTR1"/>
<dbReference type="EnsemblFungi" id="MGG_04993T0">
    <property type="protein sequence ID" value="MGG_04993T0"/>
    <property type="gene ID" value="MGG_04993"/>
</dbReference>
<dbReference type="GeneID" id="2675642"/>
<dbReference type="KEGG" id="mgr:MGG_04993"/>
<dbReference type="VEuPathDB" id="FungiDB:MGG_04993"/>
<dbReference type="eggNOG" id="KOG0346">
    <property type="taxonomic scope" value="Eukaryota"/>
</dbReference>
<dbReference type="HOGENOM" id="CLU_003041_17_1_1"/>
<dbReference type="InParanoid" id="A4QTR1"/>
<dbReference type="OMA" id="NASEQCV"/>
<dbReference type="OrthoDB" id="1191041at2759"/>
<dbReference type="Proteomes" id="UP000009058">
    <property type="component" value="Chromosome 3"/>
</dbReference>
<dbReference type="GO" id="GO:0005829">
    <property type="term" value="C:cytosol"/>
    <property type="evidence" value="ECO:0007669"/>
    <property type="project" value="TreeGrafter"/>
</dbReference>
<dbReference type="GO" id="GO:0005730">
    <property type="term" value="C:nucleolus"/>
    <property type="evidence" value="ECO:0007669"/>
    <property type="project" value="UniProtKB-SubCell"/>
</dbReference>
<dbReference type="GO" id="GO:0005524">
    <property type="term" value="F:ATP binding"/>
    <property type="evidence" value="ECO:0007669"/>
    <property type="project" value="UniProtKB-KW"/>
</dbReference>
<dbReference type="GO" id="GO:0016887">
    <property type="term" value="F:ATP hydrolysis activity"/>
    <property type="evidence" value="ECO:0007669"/>
    <property type="project" value="RHEA"/>
</dbReference>
<dbReference type="GO" id="GO:0003678">
    <property type="term" value="F:DNA helicase activity"/>
    <property type="evidence" value="ECO:0007669"/>
    <property type="project" value="EnsemblFungi"/>
</dbReference>
<dbReference type="GO" id="GO:0033677">
    <property type="term" value="F:DNA/RNA helicase activity"/>
    <property type="evidence" value="ECO:0007669"/>
    <property type="project" value="EnsemblFungi"/>
</dbReference>
<dbReference type="GO" id="GO:0003723">
    <property type="term" value="F:RNA binding"/>
    <property type="evidence" value="ECO:0007669"/>
    <property type="project" value="UniProtKB-KW"/>
</dbReference>
<dbReference type="GO" id="GO:0003724">
    <property type="term" value="F:RNA helicase activity"/>
    <property type="evidence" value="ECO:0007669"/>
    <property type="project" value="UniProtKB-EC"/>
</dbReference>
<dbReference type="GO" id="GO:0000463">
    <property type="term" value="P:maturation of LSU-rRNA from tricistronic rRNA transcript (SSU-rRNA, 5.8S rRNA, LSU-rRNA)"/>
    <property type="evidence" value="ECO:0007669"/>
    <property type="project" value="EnsemblFungi"/>
</dbReference>
<dbReference type="CDD" id="cd17961">
    <property type="entry name" value="DEADc_DDX56"/>
    <property type="match status" value="1"/>
</dbReference>
<dbReference type="CDD" id="cd18787">
    <property type="entry name" value="SF2_C_DEAD"/>
    <property type="match status" value="1"/>
</dbReference>
<dbReference type="Gene3D" id="3.40.50.300">
    <property type="entry name" value="P-loop containing nucleotide triphosphate hydrolases"/>
    <property type="match status" value="2"/>
</dbReference>
<dbReference type="InterPro" id="IPR011545">
    <property type="entry name" value="DEAD/DEAH_box_helicase_dom"/>
</dbReference>
<dbReference type="InterPro" id="IPR050079">
    <property type="entry name" value="DEAD_box_RNA_helicase"/>
</dbReference>
<dbReference type="InterPro" id="IPR014001">
    <property type="entry name" value="Helicase_ATP-bd"/>
</dbReference>
<dbReference type="InterPro" id="IPR001650">
    <property type="entry name" value="Helicase_C-like"/>
</dbReference>
<dbReference type="InterPro" id="IPR027417">
    <property type="entry name" value="P-loop_NTPase"/>
</dbReference>
<dbReference type="InterPro" id="IPR014014">
    <property type="entry name" value="RNA_helicase_DEAD_Q_motif"/>
</dbReference>
<dbReference type="PANTHER" id="PTHR47959">
    <property type="entry name" value="ATP-DEPENDENT RNA HELICASE RHLE-RELATED"/>
    <property type="match status" value="1"/>
</dbReference>
<dbReference type="PANTHER" id="PTHR47959:SF21">
    <property type="entry name" value="DEAD-BOX HELICASE 56"/>
    <property type="match status" value="1"/>
</dbReference>
<dbReference type="Pfam" id="PF00270">
    <property type="entry name" value="DEAD"/>
    <property type="match status" value="1"/>
</dbReference>
<dbReference type="Pfam" id="PF00271">
    <property type="entry name" value="Helicase_C"/>
    <property type="match status" value="2"/>
</dbReference>
<dbReference type="SMART" id="SM00487">
    <property type="entry name" value="DEXDc"/>
    <property type="match status" value="1"/>
</dbReference>
<dbReference type="SMART" id="SM00490">
    <property type="entry name" value="HELICc"/>
    <property type="match status" value="1"/>
</dbReference>
<dbReference type="SUPFAM" id="SSF52540">
    <property type="entry name" value="P-loop containing nucleoside triphosphate hydrolases"/>
    <property type="match status" value="2"/>
</dbReference>
<dbReference type="PROSITE" id="PS51192">
    <property type="entry name" value="HELICASE_ATP_BIND_1"/>
    <property type="match status" value="1"/>
</dbReference>
<dbReference type="PROSITE" id="PS51194">
    <property type="entry name" value="HELICASE_CTER"/>
    <property type="match status" value="1"/>
</dbReference>
<dbReference type="PROSITE" id="PS51195">
    <property type="entry name" value="Q_MOTIF"/>
    <property type="match status" value="1"/>
</dbReference>
<organism>
    <name type="scientific">Pyricularia oryzae (strain 70-15 / ATCC MYA-4617 / FGSC 8958)</name>
    <name type="common">Rice blast fungus</name>
    <name type="synonym">Magnaporthe oryzae</name>
    <dbReference type="NCBI Taxonomy" id="242507"/>
    <lineage>
        <taxon>Eukaryota</taxon>
        <taxon>Fungi</taxon>
        <taxon>Dikarya</taxon>
        <taxon>Ascomycota</taxon>
        <taxon>Pezizomycotina</taxon>
        <taxon>Sordariomycetes</taxon>
        <taxon>Sordariomycetidae</taxon>
        <taxon>Magnaporthales</taxon>
        <taxon>Pyriculariaceae</taxon>
        <taxon>Pyricularia</taxon>
    </lineage>
</organism>
<accession>A4QTR1</accession>
<accession>G4N3L1</accession>
<keyword id="KW-0067">ATP-binding</keyword>
<keyword id="KW-0347">Helicase</keyword>
<keyword id="KW-0378">Hydrolase</keyword>
<keyword id="KW-0547">Nucleotide-binding</keyword>
<keyword id="KW-0539">Nucleus</keyword>
<keyword id="KW-1185">Reference proteome</keyword>
<keyword id="KW-0690">Ribosome biogenesis</keyword>
<keyword id="KW-0694">RNA-binding</keyword>
<keyword id="KW-0698">rRNA processing</keyword>
<protein>
    <recommendedName>
        <fullName>ATP-dependent RNA helicase DBP9</fullName>
        <ecNumber>3.6.4.13</ecNumber>
    </recommendedName>
</protein>